<organism>
    <name type="scientific">Bacillus licheniformis (strain ATCC 14580 / DSM 13 / JCM 2505 / CCUG 7422 / NBRC 12200 / NCIMB 9375 / NCTC 10341 / NRRL NRS-1264 / Gibson 46)</name>
    <dbReference type="NCBI Taxonomy" id="279010"/>
    <lineage>
        <taxon>Bacteria</taxon>
        <taxon>Bacillati</taxon>
        <taxon>Bacillota</taxon>
        <taxon>Bacilli</taxon>
        <taxon>Bacillales</taxon>
        <taxon>Bacillaceae</taxon>
        <taxon>Bacillus</taxon>
    </lineage>
</organism>
<name>KCY_BACLD</name>
<gene>
    <name evidence="1" type="primary">cmk</name>
    <name type="ordered locus">BLi02428</name>
    <name type="ordered locus">BL02219</name>
</gene>
<feature type="chain" id="PRO_1000048185" description="Cytidylate kinase">
    <location>
        <begin position="1"/>
        <end position="226"/>
    </location>
</feature>
<feature type="binding site" evidence="1">
    <location>
        <begin position="11"/>
        <end position="19"/>
    </location>
    <ligand>
        <name>ATP</name>
        <dbReference type="ChEBI" id="CHEBI:30616"/>
    </ligand>
</feature>
<comment type="catalytic activity">
    <reaction evidence="1">
        <text>CMP + ATP = CDP + ADP</text>
        <dbReference type="Rhea" id="RHEA:11600"/>
        <dbReference type="ChEBI" id="CHEBI:30616"/>
        <dbReference type="ChEBI" id="CHEBI:58069"/>
        <dbReference type="ChEBI" id="CHEBI:60377"/>
        <dbReference type="ChEBI" id="CHEBI:456216"/>
        <dbReference type="EC" id="2.7.4.25"/>
    </reaction>
</comment>
<comment type="catalytic activity">
    <reaction evidence="1">
        <text>dCMP + ATP = dCDP + ADP</text>
        <dbReference type="Rhea" id="RHEA:25094"/>
        <dbReference type="ChEBI" id="CHEBI:30616"/>
        <dbReference type="ChEBI" id="CHEBI:57566"/>
        <dbReference type="ChEBI" id="CHEBI:58593"/>
        <dbReference type="ChEBI" id="CHEBI:456216"/>
        <dbReference type="EC" id="2.7.4.25"/>
    </reaction>
</comment>
<comment type="subcellular location">
    <subcellularLocation>
        <location evidence="1">Cytoplasm</location>
    </subcellularLocation>
</comment>
<comment type="similarity">
    <text evidence="1">Belongs to the cytidylate kinase family. Type 1 subfamily.</text>
</comment>
<evidence type="ECO:0000255" key="1">
    <source>
        <dbReference type="HAMAP-Rule" id="MF_00238"/>
    </source>
</evidence>
<sequence>MEKKLCIAIDGPAAAGKSTVAKIVARKKSYIYIDTGAMYRAITYLALEKGVDLNDEAALTALLKESAIDLTVSPEGEQKVYIAGEDVTEAIRTDSVSNQVSIVAKYAGIREEMTKRQQQLAEKGGVVMDGRDIGTHVLPNAEVKIFLLASVEERAKRRFEENVKKGYNVNYETLAEEIRRRDKLDSEREISPLKKADDALEIDTTSLTIDEVAEKILQIVDKKAQK</sequence>
<protein>
    <recommendedName>
        <fullName evidence="1">Cytidylate kinase</fullName>
        <shortName evidence="1">CK</shortName>
        <ecNumber evidence="1">2.7.4.25</ecNumber>
    </recommendedName>
    <alternativeName>
        <fullName evidence="1">Cytidine monophosphate kinase</fullName>
        <shortName evidence="1">CMP kinase</shortName>
    </alternativeName>
</protein>
<proteinExistence type="inferred from homology"/>
<dbReference type="EC" id="2.7.4.25" evidence="1"/>
<dbReference type="EMBL" id="CP000002">
    <property type="protein sequence ID" value="AAU23953.1"/>
    <property type="molecule type" value="Genomic_DNA"/>
</dbReference>
<dbReference type="EMBL" id="AE017333">
    <property type="protein sequence ID" value="AAU41306.1"/>
    <property type="molecule type" value="Genomic_DNA"/>
</dbReference>
<dbReference type="RefSeq" id="WP_003183032.1">
    <property type="nucleotide sequence ID" value="NC_006322.1"/>
</dbReference>
<dbReference type="SMR" id="Q65I08"/>
<dbReference type="STRING" id="279010.BL02219"/>
<dbReference type="GeneID" id="92860974"/>
<dbReference type="KEGG" id="bld:BLi02428"/>
<dbReference type="KEGG" id="bli:BL02219"/>
<dbReference type="eggNOG" id="COG0283">
    <property type="taxonomic scope" value="Bacteria"/>
</dbReference>
<dbReference type="HOGENOM" id="CLU_079959_0_2_9"/>
<dbReference type="Proteomes" id="UP000000606">
    <property type="component" value="Chromosome"/>
</dbReference>
<dbReference type="GO" id="GO:0005829">
    <property type="term" value="C:cytosol"/>
    <property type="evidence" value="ECO:0007669"/>
    <property type="project" value="TreeGrafter"/>
</dbReference>
<dbReference type="GO" id="GO:0005524">
    <property type="term" value="F:ATP binding"/>
    <property type="evidence" value="ECO:0007669"/>
    <property type="project" value="UniProtKB-UniRule"/>
</dbReference>
<dbReference type="GO" id="GO:0036430">
    <property type="term" value="F:CMP kinase activity"/>
    <property type="evidence" value="ECO:0007669"/>
    <property type="project" value="RHEA"/>
</dbReference>
<dbReference type="GO" id="GO:0036431">
    <property type="term" value="F:dCMP kinase activity"/>
    <property type="evidence" value="ECO:0007669"/>
    <property type="project" value="RHEA"/>
</dbReference>
<dbReference type="GO" id="GO:0015949">
    <property type="term" value="P:nucleobase-containing small molecule interconversion"/>
    <property type="evidence" value="ECO:0007669"/>
    <property type="project" value="TreeGrafter"/>
</dbReference>
<dbReference type="GO" id="GO:0006220">
    <property type="term" value="P:pyrimidine nucleotide metabolic process"/>
    <property type="evidence" value="ECO:0007669"/>
    <property type="project" value="UniProtKB-UniRule"/>
</dbReference>
<dbReference type="CDD" id="cd02020">
    <property type="entry name" value="CMPK"/>
    <property type="match status" value="1"/>
</dbReference>
<dbReference type="FunFam" id="3.40.50.300:FF:000484">
    <property type="entry name" value="Cytidylate kinase"/>
    <property type="match status" value="1"/>
</dbReference>
<dbReference type="Gene3D" id="3.40.50.300">
    <property type="entry name" value="P-loop containing nucleotide triphosphate hydrolases"/>
    <property type="match status" value="1"/>
</dbReference>
<dbReference type="HAMAP" id="MF_00238">
    <property type="entry name" value="Cytidyl_kinase_type1"/>
    <property type="match status" value="1"/>
</dbReference>
<dbReference type="InterPro" id="IPR003136">
    <property type="entry name" value="Cytidylate_kin"/>
</dbReference>
<dbReference type="InterPro" id="IPR011994">
    <property type="entry name" value="Cytidylate_kinase_dom"/>
</dbReference>
<dbReference type="InterPro" id="IPR027417">
    <property type="entry name" value="P-loop_NTPase"/>
</dbReference>
<dbReference type="NCBIfam" id="TIGR00017">
    <property type="entry name" value="cmk"/>
    <property type="match status" value="1"/>
</dbReference>
<dbReference type="PANTHER" id="PTHR21299:SF2">
    <property type="entry name" value="CYTIDYLATE KINASE"/>
    <property type="match status" value="1"/>
</dbReference>
<dbReference type="PANTHER" id="PTHR21299">
    <property type="entry name" value="CYTIDYLATE KINASE/PANTOATE-BETA-ALANINE LIGASE"/>
    <property type="match status" value="1"/>
</dbReference>
<dbReference type="Pfam" id="PF02224">
    <property type="entry name" value="Cytidylate_kin"/>
    <property type="match status" value="1"/>
</dbReference>
<dbReference type="SUPFAM" id="SSF52540">
    <property type="entry name" value="P-loop containing nucleoside triphosphate hydrolases"/>
    <property type="match status" value="1"/>
</dbReference>
<reference key="1">
    <citation type="journal article" date="2004" name="J. Mol. Microbiol. Biotechnol.">
        <title>The complete genome sequence of Bacillus licheniformis DSM13, an organism with great industrial potential.</title>
        <authorList>
            <person name="Veith B."/>
            <person name="Herzberg C."/>
            <person name="Steckel S."/>
            <person name="Feesche J."/>
            <person name="Maurer K.H."/>
            <person name="Ehrenreich P."/>
            <person name="Baeumer S."/>
            <person name="Henne A."/>
            <person name="Liesegang H."/>
            <person name="Merkl R."/>
            <person name="Ehrenreich A."/>
            <person name="Gottschalk G."/>
        </authorList>
    </citation>
    <scope>NUCLEOTIDE SEQUENCE [LARGE SCALE GENOMIC DNA]</scope>
    <source>
        <strain>ATCC 14580 / DSM 13 / JCM 2505 / CCUG 7422 / NBRC 12200 / NCIMB 9375 / NCTC 10341 / NRRL NRS-1264 / Gibson 46</strain>
    </source>
</reference>
<reference key="2">
    <citation type="journal article" date="2004" name="Genome Biol.">
        <title>Complete genome sequence of the industrial bacterium Bacillus licheniformis and comparisons with closely related Bacillus species.</title>
        <authorList>
            <person name="Rey M.W."/>
            <person name="Ramaiya P."/>
            <person name="Nelson B.A."/>
            <person name="Brody-Karpin S.D."/>
            <person name="Zaretsky E.J."/>
            <person name="Tang M."/>
            <person name="Lopez de Leon A."/>
            <person name="Xiang H."/>
            <person name="Gusti V."/>
            <person name="Clausen I.G."/>
            <person name="Olsen P.B."/>
            <person name="Rasmussen M.D."/>
            <person name="Andersen J.T."/>
            <person name="Joergensen P.L."/>
            <person name="Larsen T.S."/>
            <person name="Sorokin A."/>
            <person name="Bolotin A."/>
            <person name="Lapidus A."/>
            <person name="Galleron N."/>
            <person name="Ehrlich S.D."/>
            <person name="Berka R.M."/>
        </authorList>
    </citation>
    <scope>NUCLEOTIDE SEQUENCE [LARGE SCALE GENOMIC DNA]</scope>
    <source>
        <strain>ATCC 14580 / DSM 13 / JCM 2505 / CCUG 7422 / NBRC 12200 / NCIMB 9375 / NCTC 10341 / NRRL NRS-1264 / Gibson 46</strain>
    </source>
</reference>
<keyword id="KW-0067">ATP-binding</keyword>
<keyword id="KW-0963">Cytoplasm</keyword>
<keyword id="KW-0418">Kinase</keyword>
<keyword id="KW-0547">Nucleotide-binding</keyword>
<keyword id="KW-1185">Reference proteome</keyword>
<keyword id="KW-0808">Transferase</keyword>
<accession>Q65I08</accession>
<accession>Q62TF6</accession>